<gene>
    <name evidence="11" type="primary">Sc5d</name>
    <name evidence="10" type="synonym">C5d</name>
</gene>
<comment type="function">
    <text evidence="1 4">Catalyzes the penultimate step of the biosynthesis of cholesterol, the dehydrogenation of lathosterol into 7-dehydrocholesterol (7-DHC). Cholesterol is the major sterol component in mammalian membranes and a precursor for bile acid and steroid hormone synthesis (PubMed:4019441). In addition to its essential role in cholesterol biosynthesis, it also indirectly regulates ferroptosis through the production of 7-DHC. By diverting the spread of damage caused by peroxyl radicals from the phospholipid components to its sterol nucleus, 7-DHC prevents this form of cell death (By similarity).</text>
</comment>
<comment type="catalytic activity">
    <reaction evidence="4 5">
        <text>a Delta(7)-sterol + 2 Fe(II)-[cytochrome b5] + O2 + 2 H(+) = a Delta(5),Delta(7)-sterol + 2 Fe(III)-[cytochrome b5] + 2 H2O</text>
        <dbReference type="Rhea" id="RHEA:54320"/>
        <dbReference type="Rhea" id="RHEA-COMP:10438"/>
        <dbReference type="Rhea" id="RHEA-COMP:10439"/>
        <dbReference type="ChEBI" id="CHEBI:15377"/>
        <dbReference type="ChEBI" id="CHEBI:15378"/>
        <dbReference type="ChEBI" id="CHEBI:15379"/>
        <dbReference type="ChEBI" id="CHEBI:29033"/>
        <dbReference type="ChEBI" id="CHEBI:29034"/>
        <dbReference type="ChEBI" id="CHEBI:138130"/>
        <dbReference type="ChEBI" id="CHEBI:138131"/>
        <dbReference type="EC" id="1.14.19.20"/>
    </reaction>
    <physiologicalReaction direction="left-to-right" evidence="7 8">
        <dbReference type="Rhea" id="RHEA:54321"/>
    </physiologicalReaction>
</comment>
<comment type="catalytic activity">
    <reaction evidence="1">
        <text>lathosterol + 2 Fe(II)-[cytochrome b5] + O2 + 2 H(+) = 7-dehydrocholesterol + 2 Fe(III)-[cytochrome b5] + 2 H2O</text>
        <dbReference type="Rhea" id="RHEA:46556"/>
        <dbReference type="Rhea" id="RHEA-COMP:10438"/>
        <dbReference type="Rhea" id="RHEA-COMP:10439"/>
        <dbReference type="ChEBI" id="CHEBI:15377"/>
        <dbReference type="ChEBI" id="CHEBI:15378"/>
        <dbReference type="ChEBI" id="CHEBI:15379"/>
        <dbReference type="ChEBI" id="CHEBI:17168"/>
        <dbReference type="ChEBI" id="CHEBI:17759"/>
        <dbReference type="ChEBI" id="CHEBI:29033"/>
        <dbReference type="ChEBI" id="CHEBI:29034"/>
        <dbReference type="EC" id="1.14.19.20"/>
    </reaction>
    <physiologicalReaction direction="left-to-right" evidence="1">
        <dbReference type="Rhea" id="RHEA:46557"/>
    </physiologicalReaction>
</comment>
<comment type="catalytic activity">
    <reaction evidence="1">
        <text>5alpha-cholesta-7,24-dien-3beta-ol + 2 Fe(II)-[cytochrome b5] + O2 + 2 H(+) = 7-dehydrodesmosterol + 2 Fe(III)-[cytochrome b5] + 2 H2O</text>
        <dbReference type="Rhea" id="RHEA:47184"/>
        <dbReference type="Rhea" id="RHEA-COMP:10438"/>
        <dbReference type="Rhea" id="RHEA-COMP:10439"/>
        <dbReference type="ChEBI" id="CHEBI:15377"/>
        <dbReference type="ChEBI" id="CHEBI:15378"/>
        <dbReference type="ChEBI" id="CHEBI:15379"/>
        <dbReference type="ChEBI" id="CHEBI:16290"/>
        <dbReference type="ChEBI" id="CHEBI:27910"/>
        <dbReference type="ChEBI" id="CHEBI:29033"/>
        <dbReference type="ChEBI" id="CHEBI:29034"/>
    </reaction>
    <physiologicalReaction direction="left-to-right" evidence="1">
        <dbReference type="Rhea" id="RHEA:47185"/>
    </physiologicalReaction>
</comment>
<comment type="cofactor">
    <cofactor evidence="2">
        <name>Fe cation</name>
        <dbReference type="ChEBI" id="CHEBI:24875"/>
    </cofactor>
</comment>
<comment type="pathway">
    <text evidence="4">Steroid biosynthesis; cholesterol biosynthesis.</text>
</comment>
<comment type="subcellular location">
    <subcellularLocation>
        <location evidence="4">Endoplasmic reticulum membrane</location>
        <topology evidence="3">Multi-pass membrane protein</topology>
    </subcellularLocation>
</comment>
<comment type="domain">
    <text>The histidine box domains may contain the active site and/or be involved in metal ion binding.</text>
</comment>
<comment type="similarity">
    <text evidence="6">Belongs to the sterol desaturase family.</text>
</comment>
<feature type="chain" id="PRO_0000434558" description="Lathosterol oxidase">
    <location>
        <begin position="1"/>
        <end position="299"/>
    </location>
</feature>
<feature type="transmembrane region" description="Helical" evidence="3">
    <location>
        <begin position="32"/>
        <end position="52"/>
    </location>
</feature>
<feature type="transmembrane region" description="Helical" evidence="3">
    <location>
        <begin position="79"/>
        <end position="99"/>
    </location>
</feature>
<feature type="transmembrane region" description="Helical" evidence="3">
    <location>
        <begin position="117"/>
        <end position="137"/>
    </location>
</feature>
<feature type="domain" description="Fatty acid hydroxylase" evidence="3">
    <location>
        <begin position="124"/>
        <end position="252"/>
    </location>
</feature>
<feature type="short sequence motif" description="Histidine box-1">
    <location>
        <begin position="138"/>
        <end position="143"/>
    </location>
</feature>
<feature type="short sequence motif" description="Histidine box-2">
    <location>
        <begin position="151"/>
        <end position="155"/>
    </location>
</feature>
<feature type="short sequence motif" description="Histidine box-3">
    <location>
        <begin position="228"/>
        <end position="233"/>
    </location>
</feature>
<feature type="modified residue" description="Phosphoserine" evidence="1">
    <location>
        <position position="253"/>
    </location>
</feature>
<evidence type="ECO:0000250" key="1">
    <source>
        <dbReference type="UniProtKB" id="O75845"/>
    </source>
</evidence>
<evidence type="ECO:0000250" key="2">
    <source>
        <dbReference type="UniProtKB" id="P53045"/>
    </source>
</evidence>
<evidence type="ECO:0000255" key="3"/>
<evidence type="ECO:0000269" key="4">
    <source>
    </source>
</evidence>
<evidence type="ECO:0000269" key="5">
    <source>
    </source>
</evidence>
<evidence type="ECO:0000305" key="6"/>
<evidence type="ECO:0000305" key="7">
    <source>
    </source>
</evidence>
<evidence type="ECO:0000305" key="8">
    <source>
    </source>
</evidence>
<evidence type="ECO:0000312" key="9">
    <source>
        <dbReference type="EMBL" id="AAH81704.1"/>
    </source>
</evidence>
<evidence type="ECO:0000312" key="10">
    <source>
        <dbReference type="EMBL" id="BAB19798.1"/>
    </source>
</evidence>
<evidence type="ECO:0000312" key="11">
    <source>
        <dbReference type="RGD" id="620775"/>
    </source>
</evidence>
<proteinExistence type="evidence at protein level"/>
<keyword id="KW-0256">Endoplasmic reticulum</keyword>
<keyword id="KW-0408">Iron</keyword>
<keyword id="KW-0444">Lipid biosynthesis</keyword>
<keyword id="KW-0443">Lipid metabolism</keyword>
<keyword id="KW-0472">Membrane</keyword>
<keyword id="KW-0560">Oxidoreductase</keyword>
<keyword id="KW-0597">Phosphoprotein</keyword>
<keyword id="KW-1185">Reference proteome</keyword>
<keyword id="KW-0752">Steroid biosynthesis</keyword>
<keyword id="KW-0753">Steroid metabolism</keyword>
<keyword id="KW-0756">Sterol biosynthesis</keyword>
<keyword id="KW-1207">Sterol metabolism</keyword>
<keyword id="KW-0812">Transmembrane</keyword>
<keyword id="KW-1133">Transmembrane helix</keyword>
<name>SC5D_RAT</name>
<reference key="1">
    <citation type="submission" date="2000-12" db="EMBL/GenBank/DDBJ databases">
        <title>Cloning, expression, and site-directed mutagenesis of the mammalian sterol C5-desaturase.</title>
        <authorList>
            <person name="Nishino H."/>
            <person name="Hozumi K."/>
            <person name="Moromi M."/>
            <person name="Nam S."/>
            <person name="Ishibashi T."/>
        </authorList>
    </citation>
    <scope>NUCLEOTIDE SEQUENCE [MRNA]</scope>
    <source>
        <strain>Sprague-Dawley</strain>
        <tissue>Liver</tissue>
    </source>
</reference>
<reference key="2">
    <citation type="journal article" date="2004" name="Nature">
        <title>Genome sequence of the Brown Norway rat yields insights into mammalian evolution.</title>
        <authorList>
            <person name="Gibbs R.A."/>
            <person name="Weinstock G.M."/>
            <person name="Metzker M.L."/>
            <person name="Muzny D.M."/>
            <person name="Sodergren E.J."/>
            <person name="Scherer S."/>
            <person name="Scott G."/>
            <person name="Steffen D."/>
            <person name="Worley K.C."/>
            <person name="Burch P.E."/>
            <person name="Okwuonu G."/>
            <person name="Hines S."/>
            <person name="Lewis L."/>
            <person name="Deramo C."/>
            <person name="Delgado O."/>
            <person name="Dugan-Rocha S."/>
            <person name="Miner G."/>
            <person name="Morgan M."/>
            <person name="Hawes A."/>
            <person name="Gill R."/>
            <person name="Holt R.A."/>
            <person name="Adams M.D."/>
            <person name="Amanatides P.G."/>
            <person name="Baden-Tillson H."/>
            <person name="Barnstead M."/>
            <person name="Chin S."/>
            <person name="Evans C.A."/>
            <person name="Ferriera S."/>
            <person name="Fosler C."/>
            <person name="Glodek A."/>
            <person name="Gu Z."/>
            <person name="Jennings D."/>
            <person name="Kraft C.L."/>
            <person name="Nguyen T."/>
            <person name="Pfannkoch C.M."/>
            <person name="Sitter C."/>
            <person name="Sutton G.G."/>
            <person name="Venter J.C."/>
            <person name="Woodage T."/>
            <person name="Smith D."/>
            <person name="Lee H.-M."/>
            <person name="Gustafson E."/>
            <person name="Cahill P."/>
            <person name="Kana A."/>
            <person name="Doucette-Stamm L."/>
            <person name="Weinstock K."/>
            <person name="Fechtel K."/>
            <person name="Weiss R.B."/>
            <person name="Dunn D.M."/>
            <person name="Green E.D."/>
            <person name="Blakesley R.W."/>
            <person name="Bouffard G.G."/>
            <person name="De Jong P.J."/>
            <person name="Osoegawa K."/>
            <person name="Zhu B."/>
            <person name="Marra M."/>
            <person name="Schein J."/>
            <person name="Bosdet I."/>
            <person name="Fjell C."/>
            <person name="Jones S."/>
            <person name="Krzywinski M."/>
            <person name="Mathewson C."/>
            <person name="Siddiqui A."/>
            <person name="Wye N."/>
            <person name="McPherson J."/>
            <person name="Zhao S."/>
            <person name="Fraser C.M."/>
            <person name="Shetty J."/>
            <person name="Shatsman S."/>
            <person name="Geer K."/>
            <person name="Chen Y."/>
            <person name="Abramzon S."/>
            <person name="Nierman W.C."/>
            <person name="Havlak P.H."/>
            <person name="Chen R."/>
            <person name="Durbin K.J."/>
            <person name="Egan A."/>
            <person name="Ren Y."/>
            <person name="Song X.-Z."/>
            <person name="Li B."/>
            <person name="Liu Y."/>
            <person name="Qin X."/>
            <person name="Cawley S."/>
            <person name="Cooney A.J."/>
            <person name="D'Souza L.M."/>
            <person name="Martin K."/>
            <person name="Wu J.Q."/>
            <person name="Gonzalez-Garay M.L."/>
            <person name="Jackson A.R."/>
            <person name="Kalafus K.J."/>
            <person name="McLeod M.P."/>
            <person name="Milosavljevic A."/>
            <person name="Virk D."/>
            <person name="Volkov A."/>
            <person name="Wheeler D.A."/>
            <person name="Zhang Z."/>
            <person name="Bailey J.A."/>
            <person name="Eichler E.E."/>
            <person name="Tuzun E."/>
            <person name="Birney E."/>
            <person name="Mongin E."/>
            <person name="Ureta-Vidal A."/>
            <person name="Woodwark C."/>
            <person name="Zdobnov E."/>
            <person name="Bork P."/>
            <person name="Suyama M."/>
            <person name="Torrents D."/>
            <person name="Alexandersson M."/>
            <person name="Trask B.J."/>
            <person name="Young J.M."/>
            <person name="Huang H."/>
            <person name="Wang H."/>
            <person name="Xing H."/>
            <person name="Daniels S."/>
            <person name="Gietzen D."/>
            <person name="Schmidt J."/>
            <person name="Stevens K."/>
            <person name="Vitt U."/>
            <person name="Wingrove J."/>
            <person name="Camara F."/>
            <person name="Mar Alba M."/>
            <person name="Abril J.F."/>
            <person name="Guigo R."/>
            <person name="Smit A."/>
            <person name="Dubchak I."/>
            <person name="Rubin E.M."/>
            <person name="Couronne O."/>
            <person name="Poliakov A."/>
            <person name="Huebner N."/>
            <person name="Ganten D."/>
            <person name="Goesele C."/>
            <person name="Hummel O."/>
            <person name="Kreitler T."/>
            <person name="Lee Y.-A."/>
            <person name="Monti J."/>
            <person name="Schulz H."/>
            <person name="Zimdahl H."/>
            <person name="Himmelbauer H."/>
            <person name="Lehrach H."/>
            <person name="Jacob H.J."/>
            <person name="Bromberg S."/>
            <person name="Gullings-Handley J."/>
            <person name="Jensen-Seaman M.I."/>
            <person name="Kwitek A.E."/>
            <person name="Lazar J."/>
            <person name="Pasko D."/>
            <person name="Tonellato P.J."/>
            <person name="Twigger S."/>
            <person name="Ponting C.P."/>
            <person name="Duarte J.M."/>
            <person name="Rice S."/>
            <person name="Goodstadt L."/>
            <person name="Beatson S.A."/>
            <person name="Emes R.D."/>
            <person name="Winter E.E."/>
            <person name="Webber C."/>
            <person name="Brandt P."/>
            <person name="Nyakatura G."/>
            <person name="Adetobi M."/>
            <person name="Chiaromonte F."/>
            <person name="Elnitski L."/>
            <person name="Eswara P."/>
            <person name="Hardison R.C."/>
            <person name="Hou M."/>
            <person name="Kolbe D."/>
            <person name="Makova K."/>
            <person name="Miller W."/>
            <person name="Nekrutenko A."/>
            <person name="Riemer C."/>
            <person name="Schwartz S."/>
            <person name="Taylor J."/>
            <person name="Yang S."/>
            <person name="Zhang Y."/>
            <person name="Lindpaintner K."/>
            <person name="Andrews T.D."/>
            <person name="Caccamo M."/>
            <person name="Clamp M."/>
            <person name="Clarke L."/>
            <person name="Curwen V."/>
            <person name="Durbin R.M."/>
            <person name="Eyras E."/>
            <person name="Searle S.M."/>
            <person name="Cooper G.M."/>
            <person name="Batzoglou S."/>
            <person name="Brudno M."/>
            <person name="Sidow A."/>
            <person name="Stone E.A."/>
            <person name="Payseur B.A."/>
            <person name="Bourque G."/>
            <person name="Lopez-Otin C."/>
            <person name="Puente X.S."/>
            <person name="Chakrabarti K."/>
            <person name="Chatterji S."/>
            <person name="Dewey C."/>
            <person name="Pachter L."/>
            <person name="Bray N."/>
            <person name="Yap V.B."/>
            <person name="Caspi A."/>
            <person name="Tesler G."/>
            <person name="Pevzner P.A."/>
            <person name="Haussler D."/>
            <person name="Roskin K.M."/>
            <person name="Baertsch R."/>
            <person name="Clawson H."/>
            <person name="Furey T.S."/>
            <person name="Hinrichs A.S."/>
            <person name="Karolchik D."/>
            <person name="Kent W.J."/>
            <person name="Rosenbloom K.R."/>
            <person name="Trumbower H."/>
            <person name="Weirauch M."/>
            <person name="Cooper D.N."/>
            <person name="Stenson P.D."/>
            <person name="Ma B."/>
            <person name="Brent M."/>
            <person name="Arumugam M."/>
            <person name="Shteynberg D."/>
            <person name="Copley R.R."/>
            <person name="Taylor M.S."/>
            <person name="Riethman H."/>
            <person name="Mudunuri U."/>
            <person name="Peterson J."/>
            <person name="Guyer M."/>
            <person name="Felsenfeld A."/>
            <person name="Old S."/>
            <person name="Mockrin S."/>
            <person name="Collins F.S."/>
        </authorList>
    </citation>
    <scope>NUCLEOTIDE SEQUENCE [LARGE SCALE GENOMIC DNA]</scope>
    <source>
        <strain>Brown Norway</strain>
    </source>
</reference>
<reference key="3">
    <citation type="submission" date="2005-07" db="EMBL/GenBank/DDBJ databases">
        <authorList>
            <person name="Mural R.J."/>
            <person name="Adams M.D."/>
            <person name="Myers E.W."/>
            <person name="Smith H.O."/>
            <person name="Venter J.C."/>
        </authorList>
    </citation>
    <scope>NUCLEOTIDE SEQUENCE [LARGE SCALE GENOMIC DNA]</scope>
</reference>
<reference key="4">
    <citation type="journal article" date="2004" name="Genome Res.">
        <title>The status, quality, and expansion of the NIH full-length cDNA project: the Mammalian Gene Collection (MGC).</title>
        <authorList>
            <consortium name="The MGC Project Team"/>
        </authorList>
    </citation>
    <scope>NUCLEOTIDE SEQUENCE [LARGE SCALE MRNA]</scope>
    <source>
        <tissue evidence="9">Testis</tissue>
    </source>
</reference>
<reference key="5">
    <citation type="journal article" date="1985" name="J. Biochem.">
        <title>Partial purification and characterization of lathosterol 5-desaturase from rat liver microsomes.</title>
        <authorList>
            <person name="Honjo K."/>
            <person name="Ishibashi T."/>
            <person name="Imai Y."/>
        </authorList>
    </citation>
    <scope>FUNCTION</scope>
    <scope>SUBCELLULAR LOCATION</scope>
    <scope>CATALYTIC ACTIVITY</scope>
    <scope>PATHWAY</scope>
</reference>
<reference key="6">
    <citation type="journal article" date="1997" name="Arch. Biochem. Biophys.">
        <title>Temperature-induced differential kinetic properties between an initial burst and the following steady state in membrane-bound enzymes: studies on lathosterol 5-desaturase.</title>
        <authorList>
            <person name="Nishino H."/>
            <person name="Nakaya J."/>
            <person name="Nishi S."/>
            <person name="Kurosawa T."/>
            <person name="Ishibashi T."/>
        </authorList>
    </citation>
    <scope>CATALYTIC ACTIVITY</scope>
</reference>
<organism>
    <name type="scientific">Rattus norvegicus</name>
    <name type="common">Rat</name>
    <dbReference type="NCBI Taxonomy" id="10116"/>
    <lineage>
        <taxon>Eukaryota</taxon>
        <taxon>Metazoa</taxon>
        <taxon>Chordata</taxon>
        <taxon>Craniata</taxon>
        <taxon>Vertebrata</taxon>
        <taxon>Euteleostomi</taxon>
        <taxon>Mammalia</taxon>
        <taxon>Eutheria</taxon>
        <taxon>Euarchontoglires</taxon>
        <taxon>Glires</taxon>
        <taxon>Rodentia</taxon>
        <taxon>Myomorpha</taxon>
        <taxon>Muroidea</taxon>
        <taxon>Muridae</taxon>
        <taxon>Murinae</taxon>
        <taxon>Rattus</taxon>
    </lineage>
</organism>
<accession>Q9EQS5</accession>
<dbReference type="EC" id="1.14.19.20" evidence="4 5"/>
<dbReference type="EMBL" id="AB052846">
    <property type="protein sequence ID" value="BAB19798.1"/>
    <property type="molecule type" value="mRNA"/>
</dbReference>
<dbReference type="EMBL" id="AC133265">
    <property type="status" value="NOT_ANNOTATED_CDS"/>
    <property type="molecule type" value="Genomic_DNA"/>
</dbReference>
<dbReference type="EMBL" id="CH473975">
    <property type="protein sequence ID" value="EDL95251.1"/>
    <property type="molecule type" value="Genomic_DNA"/>
</dbReference>
<dbReference type="EMBL" id="BC081704">
    <property type="protein sequence ID" value="AAH81704.1"/>
    <property type="molecule type" value="mRNA"/>
</dbReference>
<dbReference type="RefSeq" id="NP_446094.1">
    <property type="nucleotide sequence ID" value="NM_053642.2"/>
</dbReference>
<dbReference type="RefSeq" id="XP_017450895.1">
    <property type="nucleotide sequence ID" value="XM_017595406.3"/>
</dbReference>
<dbReference type="FunCoup" id="Q9EQS5">
    <property type="interactions" value="596"/>
</dbReference>
<dbReference type="STRING" id="10116.ENSRNOP00000011284"/>
<dbReference type="PhosphoSitePlus" id="Q9EQS5"/>
<dbReference type="PaxDb" id="10116-ENSRNOP00000011284"/>
<dbReference type="Ensembl" id="ENSRNOT00000106582.1">
    <property type="protein sequence ID" value="ENSRNOP00000092291.1"/>
    <property type="gene ID" value="ENSRNOG00000065944.1"/>
</dbReference>
<dbReference type="GeneID" id="114100"/>
<dbReference type="KEGG" id="rno:114100"/>
<dbReference type="UCSC" id="RGD:620775">
    <property type="organism name" value="rat"/>
</dbReference>
<dbReference type="AGR" id="RGD:620775"/>
<dbReference type="CTD" id="6309"/>
<dbReference type="RGD" id="620775">
    <property type="gene designation" value="Sc5d"/>
</dbReference>
<dbReference type="eggNOG" id="KOG0872">
    <property type="taxonomic scope" value="Eukaryota"/>
</dbReference>
<dbReference type="GeneTree" id="ENSGT00550000075101"/>
<dbReference type="HOGENOM" id="CLU_047036_2_2_1"/>
<dbReference type="InParanoid" id="Q9EQS5"/>
<dbReference type="OMA" id="FVFICPM"/>
<dbReference type="OrthoDB" id="408954at2759"/>
<dbReference type="PhylomeDB" id="Q9EQS5"/>
<dbReference type="TreeFam" id="TF300797"/>
<dbReference type="Reactome" id="R-RNO-6807047">
    <property type="pathway name" value="Cholesterol biosynthesis via desmosterol"/>
</dbReference>
<dbReference type="Reactome" id="R-RNO-6807062">
    <property type="pathway name" value="Cholesterol biosynthesis via lathosterol"/>
</dbReference>
<dbReference type="UniPathway" id="UPA00063"/>
<dbReference type="PRO" id="PR:Q9EQS5"/>
<dbReference type="Proteomes" id="UP000002494">
    <property type="component" value="Chromosome 8"/>
</dbReference>
<dbReference type="Proteomes" id="UP000234681">
    <property type="component" value="Chromosome 8"/>
</dbReference>
<dbReference type="Bgee" id="ENSRNOG00000008305">
    <property type="expression patterns" value="Expressed in liver and 20 other cell types or tissues"/>
</dbReference>
<dbReference type="GO" id="GO:0005789">
    <property type="term" value="C:endoplasmic reticulum membrane"/>
    <property type="evidence" value="ECO:0000314"/>
    <property type="project" value="UniProtKB"/>
</dbReference>
<dbReference type="GO" id="GO:0016020">
    <property type="term" value="C:membrane"/>
    <property type="evidence" value="ECO:0000318"/>
    <property type="project" value="GO_Central"/>
</dbReference>
<dbReference type="GO" id="GO:0000248">
    <property type="term" value="F:C-5 sterol desaturase activity"/>
    <property type="evidence" value="ECO:0000314"/>
    <property type="project" value="RGD"/>
</dbReference>
<dbReference type="GO" id="GO:0050046">
    <property type="term" value="F:delta7-sterol 5(6)-desaturase activity"/>
    <property type="evidence" value="ECO:0000314"/>
    <property type="project" value="UniProtKB"/>
</dbReference>
<dbReference type="GO" id="GO:0005506">
    <property type="term" value="F:iron ion binding"/>
    <property type="evidence" value="ECO:0007669"/>
    <property type="project" value="InterPro"/>
</dbReference>
<dbReference type="GO" id="GO:0033490">
    <property type="term" value="P:cholesterol biosynthetic process via lathosterol"/>
    <property type="evidence" value="ECO:0000314"/>
    <property type="project" value="UniProtKB"/>
</dbReference>
<dbReference type="GO" id="GO:0006631">
    <property type="term" value="P:fatty acid metabolic process"/>
    <property type="evidence" value="ECO:0000304"/>
    <property type="project" value="RGD"/>
</dbReference>
<dbReference type="GO" id="GO:0110076">
    <property type="term" value="P:negative regulation of ferroptosis"/>
    <property type="evidence" value="ECO:0000250"/>
    <property type="project" value="UniProtKB"/>
</dbReference>
<dbReference type="InterPro" id="IPR006694">
    <property type="entry name" value="Fatty_acid_hydroxylase"/>
</dbReference>
<dbReference type="InterPro" id="IPR050307">
    <property type="entry name" value="Sterol_Desaturase_Related"/>
</dbReference>
<dbReference type="PANTHER" id="PTHR11863">
    <property type="entry name" value="STEROL DESATURASE"/>
    <property type="match status" value="1"/>
</dbReference>
<dbReference type="Pfam" id="PF04116">
    <property type="entry name" value="FA_hydroxylase"/>
    <property type="match status" value="1"/>
</dbReference>
<protein>
    <recommendedName>
        <fullName evidence="7">Lathosterol oxidase</fullName>
        <ecNumber evidence="4 5">1.14.19.20</ecNumber>
    </recommendedName>
    <alternativeName>
        <fullName>C-5 sterol desaturase</fullName>
    </alternativeName>
    <alternativeName>
        <fullName>Delta(7)-sterol 5-desaturase</fullName>
    </alternativeName>
    <alternativeName>
        <fullName>Delta(7)-sterol C5(6)-desaturase</fullName>
    </alternativeName>
    <alternativeName>
        <fullName>Lathosterol 5-desaturase</fullName>
    </alternativeName>
    <alternativeName>
        <fullName evidence="10">Sterol-C5-desaturase</fullName>
    </alternativeName>
</protein>
<sequence>MDLVLSAADYYFFTPYVYPATWPEDNIIRQTVSLLVVTNLGAYILYFFCATLSYYFVYDHSLMKHPQFLKNQVSREIMFTVKSLPWISIPTVSLFLLELRGYSKLYDDIGDFPNGWIHLIMSVISFLFFTDMLIYWIHRGLHHRLLYKHIHKPHHIWKIPTPFASHAFHPVDGFLQSLPYHIYPFVFPLHKVVYLGLYVLVNVWTISIHDGDFRVPQIFRPFINGSAHHTDHHMLFDYNYGQYFTLWDRIGGSFKHPSSFEGKGPHSYVKNMTEKESNSLAENGCKSKKLCNGEFTKNE</sequence>